<protein>
    <recommendedName>
        <fullName>Protein yippee-like 4</fullName>
    </recommendedName>
</protein>
<feature type="chain" id="PRO_0000212394" description="Protein yippee-like 4">
    <location>
        <begin position="1"/>
        <end position="127"/>
    </location>
</feature>
<feature type="domain" description="Yippee" evidence="1">
    <location>
        <begin position="27"/>
        <end position="124"/>
    </location>
</feature>
<feature type="binding site" evidence="1">
    <location>
        <position position="31"/>
    </location>
    <ligand>
        <name>Zn(2+)</name>
        <dbReference type="ChEBI" id="CHEBI:29105"/>
    </ligand>
</feature>
<feature type="binding site" evidence="1">
    <location>
        <position position="34"/>
    </location>
    <ligand>
        <name>Zn(2+)</name>
        <dbReference type="ChEBI" id="CHEBI:29105"/>
    </ligand>
</feature>
<feature type="binding site" evidence="1">
    <location>
        <position position="87"/>
    </location>
    <ligand>
        <name>Zn(2+)</name>
        <dbReference type="ChEBI" id="CHEBI:29105"/>
    </ligand>
</feature>
<feature type="binding site" evidence="1">
    <location>
        <position position="90"/>
    </location>
    <ligand>
        <name>Zn(2+)</name>
        <dbReference type="ChEBI" id="CHEBI:29105"/>
    </ligand>
</feature>
<feature type="modified residue" description="Phosphothreonine" evidence="3">
    <location>
        <position position="92"/>
    </location>
</feature>
<feature type="modified residue" description="Phosphothreonine" evidence="3">
    <location>
        <position position="93"/>
    </location>
</feature>
<feature type="modified residue" description="Phosphotyrosine" evidence="3">
    <location>
        <position position="98"/>
    </location>
</feature>
<proteinExistence type="evidence at protein level"/>
<name>YPEL4_RAT</name>
<keyword id="KW-0479">Metal-binding</keyword>
<keyword id="KW-0539">Nucleus</keyword>
<keyword id="KW-0597">Phosphoprotein</keyword>
<keyword id="KW-1185">Reference proteome</keyword>
<keyword id="KW-0862">Zinc</keyword>
<sequence>MPSCDPGPAPACLPTKTFRSYLPRCHRTYSCVHCRAHLAKHDELISKSFQGSHGRAYLFNSVVNVGCGPAEQRLLLTGLHSVADIFCESCKTTLGWKYEQAFETSQKYKEGKYIIEMSHMVKDNGWD</sequence>
<accession>Q5XID5</accession>
<organism>
    <name type="scientific">Rattus norvegicus</name>
    <name type="common">Rat</name>
    <dbReference type="NCBI Taxonomy" id="10116"/>
    <lineage>
        <taxon>Eukaryota</taxon>
        <taxon>Metazoa</taxon>
        <taxon>Chordata</taxon>
        <taxon>Craniata</taxon>
        <taxon>Vertebrata</taxon>
        <taxon>Euteleostomi</taxon>
        <taxon>Mammalia</taxon>
        <taxon>Eutheria</taxon>
        <taxon>Euarchontoglires</taxon>
        <taxon>Glires</taxon>
        <taxon>Rodentia</taxon>
        <taxon>Myomorpha</taxon>
        <taxon>Muroidea</taxon>
        <taxon>Muridae</taxon>
        <taxon>Murinae</taxon>
        <taxon>Rattus</taxon>
    </lineage>
</organism>
<evidence type="ECO:0000255" key="1">
    <source>
        <dbReference type="PROSITE-ProRule" id="PRU01128"/>
    </source>
</evidence>
<evidence type="ECO:0000305" key="2"/>
<evidence type="ECO:0007744" key="3">
    <source>
    </source>
</evidence>
<comment type="subcellular location">
    <subcellularLocation>
        <location>Nucleus</location>
        <location>Nucleolus</location>
    </subcellularLocation>
</comment>
<comment type="similarity">
    <text evidence="2">Belongs to the yippee family.</text>
</comment>
<gene>
    <name type="primary">Ypel4</name>
</gene>
<dbReference type="EMBL" id="BC083749">
    <property type="protein sequence ID" value="AAH83749.1"/>
    <property type="molecule type" value="mRNA"/>
</dbReference>
<dbReference type="RefSeq" id="NP_001019540.1">
    <property type="nucleotide sequence ID" value="NM_001024369.1"/>
</dbReference>
<dbReference type="RefSeq" id="XP_038961655.1">
    <property type="nucleotide sequence ID" value="XM_039105727.2"/>
</dbReference>
<dbReference type="RefSeq" id="XP_063140475.1">
    <property type="nucleotide sequence ID" value="XM_063284405.1"/>
</dbReference>
<dbReference type="SMR" id="Q5XID5"/>
<dbReference type="FunCoup" id="Q5XID5">
    <property type="interactions" value="175"/>
</dbReference>
<dbReference type="STRING" id="10116.ENSRNOP00000068589"/>
<dbReference type="iPTMnet" id="Q5XID5"/>
<dbReference type="PhosphoSitePlus" id="Q5XID5"/>
<dbReference type="PaxDb" id="10116-ENSRNOP00000009762"/>
<dbReference type="GeneID" id="502643"/>
<dbReference type="KEGG" id="rno:502643"/>
<dbReference type="UCSC" id="RGD:1560142">
    <property type="organism name" value="rat"/>
</dbReference>
<dbReference type="AGR" id="RGD:1560142"/>
<dbReference type="CTD" id="219539"/>
<dbReference type="RGD" id="1560142">
    <property type="gene designation" value="Ypel4"/>
</dbReference>
<dbReference type="eggNOG" id="KOG3399">
    <property type="taxonomic scope" value="Eukaryota"/>
</dbReference>
<dbReference type="HOGENOM" id="CLU_043857_5_2_1"/>
<dbReference type="InParanoid" id="Q5XID5"/>
<dbReference type="PhylomeDB" id="Q5XID5"/>
<dbReference type="TreeFam" id="TF313936"/>
<dbReference type="PRO" id="PR:Q5XID5"/>
<dbReference type="Proteomes" id="UP000002494">
    <property type="component" value="Chromosome 3"/>
</dbReference>
<dbReference type="Bgee" id="ENSRNOG00000060130">
    <property type="expression patterns" value="Expressed in cerebellum and 18 other cell types or tissues"/>
</dbReference>
<dbReference type="GO" id="GO:0005730">
    <property type="term" value="C:nucleolus"/>
    <property type="evidence" value="ECO:0007669"/>
    <property type="project" value="UniProtKB-SubCell"/>
</dbReference>
<dbReference type="GO" id="GO:0046872">
    <property type="term" value="F:metal ion binding"/>
    <property type="evidence" value="ECO:0007669"/>
    <property type="project" value="UniProtKB-KW"/>
</dbReference>
<dbReference type="GO" id="GO:0034107">
    <property type="term" value="P:negative regulation of erythrocyte clearance"/>
    <property type="evidence" value="ECO:0000266"/>
    <property type="project" value="RGD"/>
</dbReference>
<dbReference type="GO" id="GO:0045647">
    <property type="term" value="P:negative regulation of erythrocyte differentiation"/>
    <property type="evidence" value="ECO:0000266"/>
    <property type="project" value="RGD"/>
</dbReference>
<dbReference type="GO" id="GO:0072659">
    <property type="term" value="P:protein localization to plasma membrane"/>
    <property type="evidence" value="ECO:0000266"/>
    <property type="project" value="RGD"/>
</dbReference>
<dbReference type="GO" id="GO:0008360">
    <property type="term" value="P:regulation of cell shape"/>
    <property type="evidence" value="ECO:0000266"/>
    <property type="project" value="RGD"/>
</dbReference>
<dbReference type="InterPro" id="IPR034751">
    <property type="entry name" value="Yippee"/>
</dbReference>
<dbReference type="InterPro" id="IPR004910">
    <property type="entry name" value="Yippee/Mis18/Cereblon"/>
</dbReference>
<dbReference type="InterPro" id="IPR039058">
    <property type="entry name" value="Yippee_fam"/>
</dbReference>
<dbReference type="PANTHER" id="PTHR13848">
    <property type="entry name" value="PROTEIN YIPPEE-LIKE CG15309-RELATED"/>
    <property type="match status" value="1"/>
</dbReference>
<dbReference type="Pfam" id="PF03226">
    <property type="entry name" value="Yippee-Mis18"/>
    <property type="match status" value="1"/>
</dbReference>
<dbReference type="PROSITE" id="PS51792">
    <property type="entry name" value="YIPPEE"/>
    <property type="match status" value="1"/>
</dbReference>
<reference key="1">
    <citation type="journal article" date="2004" name="Genome Res.">
        <title>The status, quality, and expansion of the NIH full-length cDNA project: the Mammalian Gene Collection (MGC).</title>
        <authorList>
            <consortium name="The MGC Project Team"/>
        </authorList>
    </citation>
    <scope>NUCLEOTIDE SEQUENCE [LARGE SCALE MRNA]</scope>
    <source>
        <tissue>Heart</tissue>
    </source>
</reference>
<reference key="2">
    <citation type="journal article" date="2006" name="Proc. Natl. Acad. Sci. U.S.A.">
        <title>Quantitative phosphoproteomics of vasopressin-sensitive renal cells: regulation of aquaporin-2 phosphorylation at two sites.</title>
        <authorList>
            <person name="Hoffert J.D."/>
            <person name="Pisitkun T."/>
            <person name="Wang G."/>
            <person name="Shen R.-F."/>
            <person name="Knepper M.A."/>
        </authorList>
    </citation>
    <scope>PHOSPHORYLATION [LARGE SCALE ANALYSIS] AT THR-92; THR-93 AND TYR-98</scope>
    <scope>IDENTIFICATION BY MASS SPECTROMETRY [LARGE SCALE ANALYSIS]</scope>
</reference>